<organism>
    <name type="scientific">Pseudomonas syringae pv. syringae (strain B728a)</name>
    <dbReference type="NCBI Taxonomy" id="205918"/>
    <lineage>
        <taxon>Bacteria</taxon>
        <taxon>Pseudomonadati</taxon>
        <taxon>Pseudomonadota</taxon>
        <taxon>Gammaproteobacteria</taxon>
        <taxon>Pseudomonadales</taxon>
        <taxon>Pseudomonadaceae</taxon>
        <taxon>Pseudomonas</taxon>
        <taxon>Pseudomonas syringae</taxon>
    </lineage>
</organism>
<keyword id="KW-0963">Cytoplasm</keyword>
<keyword id="KW-0378">Hydrolase</keyword>
<keyword id="KW-0694">RNA-binding</keyword>
<keyword id="KW-0820">tRNA-binding</keyword>
<proteinExistence type="inferred from homology"/>
<feature type="chain" id="PRO_0000264082" description="Peptidyl-tRNA hydrolase">
    <location>
        <begin position="1"/>
        <end position="194"/>
    </location>
</feature>
<feature type="active site" description="Proton acceptor" evidence="1">
    <location>
        <position position="22"/>
    </location>
</feature>
<feature type="binding site" evidence="1">
    <location>
        <position position="17"/>
    </location>
    <ligand>
        <name>tRNA</name>
        <dbReference type="ChEBI" id="CHEBI:17843"/>
    </ligand>
</feature>
<feature type="binding site" evidence="1">
    <location>
        <position position="68"/>
    </location>
    <ligand>
        <name>tRNA</name>
        <dbReference type="ChEBI" id="CHEBI:17843"/>
    </ligand>
</feature>
<feature type="binding site" evidence="1">
    <location>
        <position position="70"/>
    </location>
    <ligand>
        <name>tRNA</name>
        <dbReference type="ChEBI" id="CHEBI:17843"/>
    </ligand>
</feature>
<feature type="binding site" evidence="1">
    <location>
        <position position="116"/>
    </location>
    <ligand>
        <name>tRNA</name>
        <dbReference type="ChEBI" id="CHEBI:17843"/>
    </ligand>
</feature>
<feature type="site" description="Discriminates between blocked and unblocked aminoacyl-tRNA" evidence="1">
    <location>
        <position position="12"/>
    </location>
</feature>
<feature type="site" description="Stabilizes the basic form of H active site to accept a proton" evidence="1">
    <location>
        <position position="95"/>
    </location>
</feature>
<sequence>MTAIQLIVGLGNPGAEYEQTRHNAGAFFVERIAAAQRVDLVPERKFFGLTGRFTHQGQDVRLLIPTTYMNRSGQAVAALAGFYRIPVESILVAHDELDLPPGVAKLKVGGGHGGHNGLRDIIAQLGNQNTFHRLRLGIGHPGDASKVSGFVLGRAPRAEQEKLDASIDFALGVLPDIFAGEWNRAMKNLHSQKA</sequence>
<name>PTH_PSEU2</name>
<protein>
    <recommendedName>
        <fullName evidence="1">Peptidyl-tRNA hydrolase</fullName>
        <shortName evidence="1">Pth</shortName>
        <ecNumber evidence="1">3.1.1.29</ecNumber>
    </recommendedName>
</protein>
<gene>
    <name evidence="1" type="primary">pth</name>
    <name type="ordered locus">Psyr_0942</name>
</gene>
<dbReference type="EC" id="3.1.1.29" evidence="1"/>
<dbReference type="EMBL" id="CP000075">
    <property type="protein sequence ID" value="AAY35998.1"/>
    <property type="molecule type" value="Genomic_DNA"/>
</dbReference>
<dbReference type="RefSeq" id="WP_011266729.1">
    <property type="nucleotide sequence ID" value="NC_007005.1"/>
</dbReference>
<dbReference type="RefSeq" id="YP_234036.1">
    <property type="nucleotide sequence ID" value="NC_007005.1"/>
</dbReference>
<dbReference type="SMR" id="Q4ZXX4"/>
<dbReference type="STRING" id="205918.Psyr_0942"/>
<dbReference type="KEGG" id="psb:Psyr_0942"/>
<dbReference type="PATRIC" id="fig|205918.7.peg.971"/>
<dbReference type="eggNOG" id="COG0193">
    <property type="taxonomic scope" value="Bacteria"/>
</dbReference>
<dbReference type="HOGENOM" id="CLU_062456_3_1_6"/>
<dbReference type="OrthoDB" id="9800507at2"/>
<dbReference type="Proteomes" id="UP000000426">
    <property type="component" value="Chromosome"/>
</dbReference>
<dbReference type="GO" id="GO:0005737">
    <property type="term" value="C:cytoplasm"/>
    <property type="evidence" value="ECO:0007669"/>
    <property type="project" value="UniProtKB-SubCell"/>
</dbReference>
<dbReference type="GO" id="GO:0004045">
    <property type="term" value="F:peptidyl-tRNA hydrolase activity"/>
    <property type="evidence" value="ECO:0007669"/>
    <property type="project" value="UniProtKB-UniRule"/>
</dbReference>
<dbReference type="GO" id="GO:0000049">
    <property type="term" value="F:tRNA binding"/>
    <property type="evidence" value="ECO:0007669"/>
    <property type="project" value="UniProtKB-UniRule"/>
</dbReference>
<dbReference type="GO" id="GO:0006515">
    <property type="term" value="P:protein quality control for misfolded or incompletely synthesized proteins"/>
    <property type="evidence" value="ECO:0007669"/>
    <property type="project" value="UniProtKB-UniRule"/>
</dbReference>
<dbReference type="GO" id="GO:0072344">
    <property type="term" value="P:rescue of stalled ribosome"/>
    <property type="evidence" value="ECO:0007669"/>
    <property type="project" value="UniProtKB-UniRule"/>
</dbReference>
<dbReference type="CDD" id="cd00462">
    <property type="entry name" value="PTH"/>
    <property type="match status" value="1"/>
</dbReference>
<dbReference type="FunFam" id="3.40.50.1470:FF:000001">
    <property type="entry name" value="Peptidyl-tRNA hydrolase"/>
    <property type="match status" value="1"/>
</dbReference>
<dbReference type="Gene3D" id="3.40.50.1470">
    <property type="entry name" value="Peptidyl-tRNA hydrolase"/>
    <property type="match status" value="1"/>
</dbReference>
<dbReference type="HAMAP" id="MF_00083">
    <property type="entry name" value="Pept_tRNA_hydro_bact"/>
    <property type="match status" value="1"/>
</dbReference>
<dbReference type="InterPro" id="IPR001328">
    <property type="entry name" value="Pept_tRNA_hydro"/>
</dbReference>
<dbReference type="InterPro" id="IPR018171">
    <property type="entry name" value="Pept_tRNA_hydro_CS"/>
</dbReference>
<dbReference type="InterPro" id="IPR036416">
    <property type="entry name" value="Pept_tRNA_hydro_sf"/>
</dbReference>
<dbReference type="NCBIfam" id="TIGR00447">
    <property type="entry name" value="pth"/>
    <property type="match status" value="1"/>
</dbReference>
<dbReference type="PANTHER" id="PTHR17224">
    <property type="entry name" value="PEPTIDYL-TRNA HYDROLASE"/>
    <property type="match status" value="1"/>
</dbReference>
<dbReference type="PANTHER" id="PTHR17224:SF1">
    <property type="entry name" value="PEPTIDYL-TRNA HYDROLASE"/>
    <property type="match status" value="1"/>
</dbReference>
<dbReference type="Pfam" id="PF01195">
    <property type="entry name" value="Pept_tRNA_hydro"/>
    <property type="match status" value="1"/>
</dbReference>
<dbReference type="SUPFAM" id="SSF53178">
    <property type="entry name" value="Peptidyl-tRNA hydrolase-like"/>
    <property type="match status" value="1"/>
</dbReference>
<dbReference type="PROSITE" id="PS01195">
    <property type="entry name" value="PEPT_TRNA_HYDROL_1"/>
    <property type="match status" value="1"/>
</dbReference>
<dbReference type="PROSITE" id="PS01196">
    <property type="entry name" value="PEPT_TRNA_HYDROL_2"/>
    <property type="match status" value="1"/>
</dbReference>
<comment type="function">
    <text evidence="1">Hydrolyzes ribosome-free peptidyl-tRNAs (with 1 or more amino acids incorporated), which drop off the ribosome during protein synthesis, or as a result of ribosome stalling.</text>
</comment>
<comment type="function">
    <text evidence="1">Catalyzes the release of premature peptidyl moieties from peptidyl-tRNA molecules trapped in stalled 50S ribosomal subunits, and thus maintains levels of free tRNAs and 50S ribosomes.</text>
</comment>
<comment type="catalytic activity">
    <reaction evidence="1">
        <text>an N-acyl-L-alpha-aminoacyl-tRNA + H2O = an N-acyl-L-amino acid + a tRNA + H(+)</text>
        <dbReference type="Rhea" id="RHEA:54448"/>
        <dbReference type="Rhea" id="RHEA-COMP:10123"/>
        <dbReference type="Rhea" id="RHEA-COMP:13883"/>
        <dbReference type="ChEBI" id="CHEBI:15377"/>
        <dbReference type="ChEBI" id="CHEBI:15378"/>
        <dbReference type="ChEBI" id="CHEBI:59874"/>
        <dbReference type="ChEBI" id="CHEBI:78442"/>
        <dbReference type="ChEBI" id="CHEBI:138191"/>
        <dbReference type="EC" id="3.1.1.29"/>
    </reaction>
</comment>
<comment type="subunit">
    <text evidence="1">Monomer.</text>
</comment>
<comment type="subcellular location">
    <subcellularLocation>
        <location evidence="1">Cytoplasm</location>
    </subcellularLocation>
</comment>
<comment type="similarity">
    <text evidence="1">Belongs to the PTH family.</text>
</comment>
<reference key="1">
    <citation type="journal article" date="2005" name="Proc. Natl. Acad. Sci. U.S.A.">
        <title>Comparison of the complete genome sequences of Pseudomonas syringae pv. syringae B728a and pv. tomato DC3000.</title>
        <authorList>
            <person name="Feil H."/>
            <person name="Feil W.S."/>
            <person name="Chain P."/>
            <person name="Larimer F."/>
            <person name="Dibartolo G."/>
            <person name="Copeland A."/>
            <person name="Lykidis A."/>
            <person name="Trong S."/>
            <person name="Nolan M."/>
            <person name="Goltsman E."/>
            <person name="Thiel J."/>
            <person name="Malfatti S."/>
            <person name="Loper J.E."/>
            <person name="Lapidus A."/>
            <person name="Detter J.C."/>
            <person name="Land M."/>
            <person name="Richardson P.M."/>
            <person name="Kyrpides N.C."/>
            <person name="Ivanova N."/>
            <person name="Lindow S.E."/>
        </authorList>
    </citation>
    <scope>NUCLEOTIDE SEQUENCE [LARGE SCALE GENOMIC DNA]</scope>
    <source>
        <strain>B728a</strain>
    </source>
</reference>
<evidence type="ECO:0000255" key="1">
    <source>
        <dbReference type="HAMAP-Rule" id="MF_00083"/>
    </source>
</evidence>
<accession>Q4ZXX4</accession>